<evidence type="ECO:0000255" key="1">
    <source>
        <dbReference type="HAMAP-Rule" id="MF_00111"/>
    </source>
</evidence>
<reference key="1">
    <citation type="journal article" date="2007" name="Curr. Biol.">
        <title>Reduced genome of the thioautotrophic intracellular symbiont in a deep-sea clam, Calyptogena okutanii.</title>
        <authorList>
            <person name="Kuwahara H."/>
            <person name="Yoshida T."/>
            <person name="Takaki Y."/>
            <person name="Shimamura S."/>
            <person name="Nishi S."/>
            <person name="Harada M."/>
            <person name="Matsuyama K."/>
            <person name="Takishita K."/>
            <person name="Kawato M."/>
            <person name="Uematsu K."/>
            <person name="Fujiwara Y."/>
            <person name="Sato T."/>
            <person name="Kato C."/>
            <person name="Kitagawa M."/>
            <person name="Kato I."/>
            <person name="Maruyama T."/>
        </authorList>
    </citation>
    <scope>NUCLEOTIDE SEQUENCE [LARGE SCALE GENOMIC DNA]</scope>
    <source>
        <strain>HA</strain>
    </source>
</reference>
<dbReference type="EC" id="2.5.1.7" evidence="1"/>
<dbReference type="EMBL" id="AP009247">
    <property type="protein sequence ID" value="BAF61671.1"/>
    <property type="molecule type" value="Genomic_DNA"/>
</dbReference>
<dbReference type="RefSeq" id="WP_011929941.1">
    <property type="nucleotide sequence ID" value="NC_009465.1"/>
</dbReference>
<dbReference type="SMR" id="A5CWI9"/>
<dbReference type="STRING" id="412965.COSY_0554"/>
<dbReference type="KEGG" id="vok:COSY_0554"/>
<dbReference type="eggNOG" id="COG0766">
    <property type="taxonomic scope" value="Bacteria"/>
</dbReference>
<dbReference type="HOGENOM" id="CLU_027387_0_0_6"/>
<dbReference type="OrthoDB" id="9803760at2"/>
<dbReference type="UniPathway" id="UPA00219"/>
<dbReference type="Proteomes" id="UP000000247">
    <property type="component" value="Chromosome"/>
</dbReference>
<dbReference type="GO" id="GO:0005737">
    <property type="term" value="C:cytoplasm"/>
    <property type="evidence" value="ECO:0007669"/>
    <property type="project" value="UniProtKB-SubCell"/>
</dbReference>
<dbReference type="GO" id="GO:0008760">
    <property type="term" value="F:UDP-N-acetylglucosamine 1-carboxyvinyltransferase activity"/>
    <property type="evidence" value="ECO:0007669"/>
    <property type="project" value="UniProtKB-UniRule"/>
</dbReference>
<dbReference type="GO" id="GO:0051301">
    <property type="term" value="P:cell division"/>
    <property type="evidence" value="ECO:0007669"/>
    <property type="project" value="UniProtKB-KW"/>
</dbReference>
<dbReference type="GO" id="GO:0071555">
    <property type="term" value="P:cell wall organization"/>
    <property type="evidence" value="ECO:0007669"/>
    <property type="project" value="UniProtKB-KW"/>
</dbReference>
<dbReference type="GO" id="GO:0009252">
    <property type="term" value="P:peptidoglycan biosynthetic process"/>
    <property type="evidence" value="ECO:0007669"/>
    <property type="project" value="UniProtKB-UniRule"/>
</dbReference>
<dbReference type="GO" id="GO:0008360">
    <property type="term" value="P:regulation of cell shape"/>
    <property type="evidence" value="ECO:0007669"/>
    <property type="project" value="UniProtKB-KW"/>
</dbReference>
<dbReference type="GO" id="GO:0019277">
    <property type="term" value="P:UDP-N-acetylgalactosamine biosynthetic process"/>
    <property type="evidence" value="ECO:0007669"/>
    <property type="project" value="InterPro"/>
</dbReference>
<dbReference type="CDD" id="cd01555">
    <property type="entry name" value="UdpNAET"/>
    <property type="match status" value="1"/>
</dbReference>
<dbReference type="FunFam" id="3.65.10.10:FF:000001">
    <property type="entry name" value="UDP-N-acetylglucosamine 1-carboxyvinyltransferase"/>
    <property type="match status" value="1"/>
</dbReference>
<dbReference type="Gene3D" id="3.65.10.10">
    <property type="entry name" value="Enolpyruvate transferase domain"/>
    <property type="match status" value="2"/>
</dbReference>
<dbReference type="HAMAP" id="MF_00111">
    <property type="entry name" value="MurA"/>
    <property type="match status" value="1"/>
</dbReference>
<dbReference type="InterPro" id="IPR001986">
    <property type="entry name" value="Enolpyruvate_Tfrase_dom"/>
</dbReference>
<dbReference type="InterPro" id="IPR036968">
    <property type="entry name" value="Enolpyruvate_Tfrase_sf"/>
</dbReference>
<dbReference type="InterPro" id="IPR050068">
    <property type="entry name" value="MurA_subfamily"/>
</dbReference>
<dbReference type="InterPro" id="IPR013792">
    <property type="entry name" value="RNA3'P_cycl/enolpyr_Trfase_a/b"/>
</dbReference>
<dbReference type="InterPro" id="IPR005750">
    <property type="entry name" value="UDP_GlcNAc_COvinyl_MurA"/>
</dbReference>
<dbReference type="NCBIfam" id="TIGR01072">
    <property type="entry name" value="murA"/>
    <property type="match status" value="1"/>
</dbReference>
<dbReference type="NCBIfam" id="NF006873">
    <property type="entry name" value="PRK09369.1"/>
    <property type="match status" value="1"/>
</dbReference>
<dbReference type="PANTHER" id="PTHR43783">
    <property type="entry name" value="UDP-N-ACETYLGLUCOSAMINE 1-CARBOXYVINYLTRANSFERASE"/>
    <property type="match status" value="1"/>
</dbReference>
<dbReference type="PANTHER" id="PTHR43783:SF1">
    <property type="entry name" value="UDP-N-ACETYLGLUCOSAMINE 1-CARBOXYVINYLTRANSFERASE"/>
    <property type="match status" value="1"/>
</dbReference>
<dbReference type="Pfam" id="PF00275">
    <property type="entry name" value="EPSP_synthase"/>
    <property type="match status" value="1"/>
</dbReference>
<dbReference type="SUPFAM" id="SSF55205">
    <property type="entry name" value="EPT/RTPC-like"/>
    <property type="match status" value="1"/>
</dbReference>
<gene>
    <name evidence="1" type="primary">murA</name>
    <name type="ordered locus">COSY_0554</name>
</gene>
<accession>A5CWI9</accession>
<comment type="function">
    <text evidence="1">Cell wall formation. Adds enolpyruvyl to UDP-N-acetylglucosamine.</text>
</comment>
<comment type="catalytic activity">
    <reaction evidence="1">
        <text>phosphoenolpyruvate + UDP-N-acetyl-alpha-D-glucosamine = UDP-N-acetyl-3-O-(1-carboxyvinyl)-alpha-D-glucosamine + phosphate</text>
        <dbReference type="Rhea" id="RHEA:18681"/>
        <dbReference type="ChEBI" id="CHEBI:43474"/>
        <dbReference type="ChEBI" id="CHEBI:57705"/>
        <dbReference type="ChEBI" id="CHEBI:58702"/>
        <dbReference type="ChEBI" id="CHEBI:68483"/>
        <dbReference type="EC" id="2.5.1.7"/>
    </reaction>
</comment>
<comment type="pathway">
    <text evidence="1">Cell wall biogenesis; peptidoglycan biosynthesis.</text>
</comment>
<comment type="subcellular location">
    <subcellularLocation>
        <location evidence="1">Cytoplasm</location>
    </subcellularLocation>
</comment>
<comment type="similarity">
    <text evidence="1">Belongs to the EPSP synthase family. MurA subfamily.</text>
</comment>
<feature type="chain" id="PRO_1000023120" description="UDP-N-acetylglucosamine 1-carboxyvinyltransferase">
    <location>
        <begin position="1"/>
        <end position="419"/>
    </location>
</feature>
<feature type="active site" description="Proton donor" evidence="1">
    <location>
        <position position="117"/>
    </location>
</feature>
<feature type="binding site" evidence="1">
    <location>
        <begin position="22"/>
        <end position="23"/>
    </location>
    <ligand>
        <name>phosphoenolpyruvate</name>
        <dbReference type="ChEBI" id="CHEBI:58702"/>
    </ligand>
</feature>
<feature type="binding site" evidence="1">
    <location>
        <position position="93"/>
    </location>
    <ligand>
        <name>UDP-N-acetyl-alpha-D-glucosamine</name>
        <dbReference type="ChEBI" id="CHEBI:57705"/>
    </ligand>
</feature>
<feature type="binding site" evidence="1">
    <location>
        <position position="306"/>
    </location>
    <ligand>
        <name>UDP-N-acetyl-alpha-D-glucosamine</name>
        <dbReference type="ChEBI" id="CHEBI:57705"/>
    </ligand>
</feature>
<feature type="binding site" evidence="1">
    <location>
        <position position="328"/>
    </location>
    <ligand>
        <name>UDP-N-acetyl-alpha-D-glucosamine</name>
        <dbReference type="ChEBI" id="CHEBI:57705"/>
    </ligand>
</feature>
<feature type="modified residue" description="2-(S-cysteinyl)pyruvic acid O-phosphothioketal" evidence="1">
    <location>
        <position position="117"/>
    </location>
</feature>
<name>MURA_VESOH</name>
<keyword id="KW-0131">Cell cycle</keyword>
<keyword id="KW-0132">Cell division</keyword>
<keyword id="KW-0133">Cell shape</keyword>
<keyword id="KW-0961">Cell wall biogenesis/degradation</keyword>
<keyword id="KW-0963">Cytoplasm</keyword>
<keyword id="KW-0573">Peptidoglycan synthesis</keyword>
<keyword id="KW-0670">Pyruvate</keyword>
<keyword id="KW-1185">Reference proteome</keyword>
<keyword id="KW-0808">Transferase</keyword>
<protein>
    <recommendedName>
        <fullName evidence="1">UDP-N-acetylglucosamine 1-carboxyvinyltransferase</fullName>
        <ecNumber evidence="1">2.5.1.7</ecNumber>
    </recommendedName>
    <alternativeName>
        <fullName evidence="1">Enoylpyruvate transferase</fullName>
    </alternativeName>
    <alternativeName>
        <fullName evidence="1">UDP-N-acetylglucosamine enolpyruvyl transferase</fullName>
        <shortName evidence="1">EPT</shortName>
    </alternativeName>
</protein>
<organism>
    <name type="scientific">Vesicomyosocius okutanii subsp. Calyptogena okutanii (strain HA)</name>
    <dbReference type="NCBI Taxonomy" id="412965"/>
    <lineage>
        <taxon>Bacteria</taxon>
        <taxon>Pseudomonadati</taxon>
        <taxon>Pseudomonadota</taxon>
        <taxon>Gammaproteobacteria</taxon>
        <taxon>Candidatus Pseudothioglobaceae</taxon>
        <taxon>Candidatus Vesicomyosocius</taxon>
    </lineage>
</organism>
<proteinExistence type="inferred from homology"/>
<sequence>MYKLIIHGGISLNGSVITAGSKNSSLPILFASILANGPITLTNTPHLSDVSTTLRLLMDMGAEFILESDNSLFINGSKLTNLVAQYNLVKTMRASILALGPMLAKYGKAKISLPGGCAIGPRPVNLHLEALENLGATIKVKNGYIYATAKELIGTKIHFKQISVTATENIIMAATLATGITTIYNAAQEPEIVDLVKCLIKMGAIISGAGTSIIIIQGVDELSGVTYSVCPDRIEAGTYLVATAITGGKITIKNVHYQSMHAILEKLLETGADIKTNKNSIILDMKGKRPRAVNIKTSTYPNFPTDMQAQFTALNAIADGYSTITETIFENRFMHIPELSRMGANLVLKGNTVVCKGVKYLTGMPLIATDLRASASLVLAGLVATGTTTIERVYHLDRGYETIEEKLKLLGAQIERVQD</sequence>